<protein>
    <recommendedName>
        <fullName>Uncharacterized protein YbfE</fullName>
    </recommendedName>
</protein>
<organism>
    <name type="scientific">Bacillus subtilis (strain 168)</name>
    <dbReference type="NCBI Taxonomy" id="224308"/>
    <lineage>
        <taxon>Bacteria</taxon>
        <taxon>Bacillati</taxon>
        <taxon>Bacillota</taxon>
        <taxon>Bacilli</taxon>
        <taxon>Bacillales</taxon>
        <taxon>Bacillaceae</taxon>
        <taxon>Bacillus</taxon>
    </lineage>
</organism>
<sequence>MNHCLHSNTLAKIVCTVTLITLYFYFFSTRFNELIELAVQMFFALIGLFWVFIVSPFSRKVQISERFKQKSENARIVGMIDFVLEQKYKKSISE</sequence>
<accession>O31445</accession>
<evidence type="ECO:0000255" key="1"/>
<evidence type="ECO:0000305" key="2"/>
<feature type="chain" id="PRO_0000049462" description="Uncharacterized protein YbfE">
    <location>
        <begin position="1"/>
        <end position="94"/>
    </location>
</feature>
<feature type="transmembrane region" description="Helical" evidence="1">
    <location>
        <begin position="9"/>
        <end position="29"/>
    </location>
</feature>
<feature type="transmembrane region" description="Helical" evidence="1">
    <location>
        <begin position="34"/>
        <end position="54"/>
    </location>
</feature>
<feature type="sequence conflict" description="In Ref. 1; BAA33115." evidence="2" ref="1">
    <original>Y</original>
    <variation>C</variation>
    <location>
        <position position="88"/>
    </location>
</feature>
<proteinExistence type="predicted"/>
<reference key="1">
    <citation type="submission" date="1997-07" db="EMBL/GenBank/DDBJ databases">
        <title>Sequence analysis of the 70kb region between 17 and 23 degree of the Bacillus subtilis chromosome.</title>
        <authorList>
            <person name="Haga K."/>
            <person name="Liu H."/>
            <person name="Yasumoto K."/>
            <person name="Takahashi H."/>
            <person name="Yoshikawa H."/>
        </authorList>
    </citation>
    <scope>NUCLEOTIDE SEQUENCE [GENOMIC DNA]</scope>
    <source>
        <strain>168</strain>
    </source>
</reference>
<reference key="2">
    <citation type="journal article" date="1997" name="Nature">
        <title>The complete genome sequence of the Gram-positive bacterium Bacillus subtilis.</title>
        <authorList>
            <person name="Kunst F."/>
            <person name="Ogasawara N."/>
            <person name="Moszer I."/>
            <person name="Albertini A.M."/>
            <person name="Alloni G."/>
            <person name="Azevedo V."/>
            <person name="Bertero M.G."/>
            <person name="Bessieres P."/>
            <person name="Bolotin A."/>
            <person name="Borchert S."/>
            <person name="Borriss R."/>
            <person name="Boursier L."/>
            <person name="Brans A."/>
            <person name="Braun M."/>
            <person name="Brignell S.C."/>
            <person name="Bron S."/>
            <person name="Brouillet S."/>
            <person name="Bruschi C.V."/>
            <person name="Caldwell B."/>
            <person name="Capuano V."/>
            <person name="Carter N.M."/>
            <person name="Choi S.-K."/>
            <person name="Codani J.-J."/>
            <person name="Connerton I.F."/>
            <person name="Cummings N.J."/>
            <person name="Daniel R.A."/>
            <person name="Denizot F."/>
            <person name="Devine K.M."/>
            <person name="Duesterhoeft A."/>
            <person name="Ehrlich S.D."/>
            <person name="Emmerson P.T."/>
            <person name="Entian K.-D."/>
            <person name="Errington J."/>
            <person name="Fabret C."/>
            <person name="Ferrari E."/>
            <person name="Foulger D."/>
            <person name="Fritz C."/>
            <person name="Fujita M."/>
            <person name="Fujita Y."/>
            <person name="Fuma S."/>
            <person name="Galizzi A."/>
            <person name="Galleron N."/>
            <person name="Ghim S.-Y."/>
            <person name="Glaser P."/>
            <person name="Goffeau A."/>
            <person name="Golightly E.J."/>
            <person name="Grandi G."/>
            <person name="Guiseppi G."/>
            <person name="Guy B.J."/>
            <person name="Haga K."/>
            <person name="Haiech J."/>
            <person name="Harwood C.R."/>
            <person name="Henaut A."/>
            <person name="Hilbert H."/>
            <person name="Holsappel S."/>
            <person name="Hosono S."/>
            <person name="Hullo M.-F."/>
            <person name="Itaya M."/>
            <person name="Jones L.-M."/>
            <person name="Joris B."/>
            <person name="Karamata D."/>
            <person name="Kasahara Y."/>
            <person name="Klaerr-Blanchard M."/>
            <person name="Klein C."/>
            <person name="Kobayashi Y."/>
            <person name="Koetter P."/>
            <person name="Koningstein G."/>
            <person name="Krogh S."/>
            <person name="Kumano M."/>
            <person name="Kurita K."/>
            <person name="Lapidus A."/>
            <person name="Lardinois S."/>
            <person name="Lauber J."/>
            <person name="Lazarevic V."/>
            <person name="Lee S.-M."/>
            <person name="Levine A."/>
            <person name="Liu H."/>
            <person name="Masuda S."/>
            <person name="Mauel C."/>
            <person name="Medigue C."/>
            <person name="Medina N."/>
            <person name="Mellado R.P."/>
            <person name="Mizuno M."/>
            <person name="Moestl D."/>
            <person name="Nakai S."/>
            <person name="Noback M."/>
            <person name="Noone D."/>
            <person name="O'Reilly M."/>
            <person name="Ogawa K."/>
            <person name="Ogiwara A."/>
            <person name="Oudega B."/>
            <person name="Park S.-H."/>
            <person name="Parro V."/>
            <person name="Pohl T.M."/>
            <person name="Portetelle D."/>
            <person name="Porwollik S."/>
            <person name="Prescott A.M."/>
            <person name="Presecan E."/>
            <person name="Pujic P."/>
            <person name="Purnelle B."/>
            <person name="Rapoport G."/>
            <person name="Rey M."/>
            <person name="Reynolds S."/>
            <person name="Rieger M."/>
            <person name="Rivolta C."/>
            <person name="Rocha E."/>
            <person name="Roche B."/>
            <person name="Rose M."/>
            <person name="Sadaie Y."/>
            <person name="Sato T."/>
            <person name="Scanlan E."/>
            <person name="Schleich S."/>
            <person name="Schroeter R."/>
            <person name="Scoffone F."/>
            <person name="Sekiguchi J."/>
            <person name="Sekowska A."/>
            <person name="Seror S.J."/>
            <person name="Serror P."/>
            <person name="Shin B.-S."/>
            <person name="Soldo B."/>
            <person name="Sorokin A."/>
            <person name="Tacconi E."/>
            <person name="Takagi T."/>
            <person name="Takahashi H."/>
            <person name="Takemaru K."/>
            <person name="Takeuchi M."/>
            <person name="Tamakoshi A."/>
            <person name="Tanaka T."/>
            <person name="Terpstra P."/>
            <person name="Tognoni A."/>
            <person name="Tosato V."/>
            <person name="Uchiyama S."/>
            <person name="Vandenbol M."/>
            <person name="Vannier F."/>
            <person name="Vassarotti A."/>
            <person name="Viari A."/>
            <person name="Wambutt R."/>
            <person name="Wedler E."/>
            <person name="Wedler H."/>
            <person name="Weitzenegger T."/>
            <person name="Winters P."/>
            <person name="Wipat A."/>
            <person name="Yamamoto H."/>
            <person name="Yamane K."/>
            <person name="Yasumoto K."/>
            <person name="Yata K."/>
            <person name="Yoshida K."/>
            <person name="Yoshikawa H.-F."/>
            <person name="Zumstein E."/>
            <person name="Yoshikawa H."/>
            <person name="Danchin A."/>
        </authorList>
    </citation>
    <scope>NUCLEOTIDE SEQUENCE [LARGE SCALE GENOMIC DNA]</scope>
    <source>
        <strain>168</strain>
    </source>
</reference>
<reference key="3">
    <citation type="journal article" date="2009" name="Microbiology">
        <title>From a consortium sequence to a unified sequence: the Bacillus subtilis 168 reference genome a decade later.</title>
        <authorList>
            <person name="Barbe V."/>
            <person name="Cruveiller S."/>
            <person name="Kunst F."/>
            <person name="Lenoble P."/>
            <person name="Meurice G."/>
            <person name="Sekowska A."/>
            <person name="Vallenet D."/>
            <person name="Wang T."/>
            <person name="Moszer I."/>
            <person name="Medigue C."/>
            <person name="Danchin A."/>
        </authorList>
    </citation>
    <scope>SEQUENCE REVISION TO 88</scope>
</reference>
<gene>
    <name type="primary">ybfE</name>
    <name type="ordered locus">BSU02180</name>
</gene>
<comment type="subcellular location">
    <subcellularLocation>
        <location evidence="2">Cell membrane</location>
        <topology evidence="2">Multi-pass membrane protein</topology>
    </subcellularLocation>
</comment>
<keyword id="KW-1003">Cell membrane</keyword>
<keyword id="KW-0472">Membrane</keyword>
<keyword id="KW-1185">Reference proteome</keyword>
<keyword id="KW-0812">Transmembrane</keyword>
<keyword id="KW-1133">Transmembrane helix</keyword>
<dbReference type="EMBL" id="AB006424">
    <property type="protein sequence ID" value="BAA33115.1"/>
    <property type="molecule type" value="Genomic_DNA"/>
</dbReference>
<dbReference type="EMBL" id="AL009126">
    <property type="protein sequence ID" value="CAB12012.2"/>
    <property type="molecule type" value="Genomic_DNA"/>
</dbReference>
<dbReference type="PIR" id="H69748">
    <property type="entry name" value="H69748"/>
</dbReference>
<dbReference type="RefSeq" id="NP_388100.2">
    <property type="nucleotide sequence ID" value="NC_000964.3"/>
</dbReference>
<dbReference type="SMR" id="O31445"/>
<dbReference type="FunCoup" id="O31445">
    <property type="interactions" value="88"/>
</dbReference>
<dbReference type="PaxDb" id="224308-BSU02180"/>
<dbReference type="KEGG" id="bsu:BSU02180"/>
<dbReference type="PATRIC" id="fig|224308.43.peg.219"/>
<dbReference type="InParanoid" id="O31445"/>
<dbReference type="OrthoDB" id="2927622at2"/>
<dbReference type="BioCyc" id="BSUB:BSU02180-MONOMER"/>
<dbReference type="Proteomes" id="UP000001570">
    <property type="component" value="Chromosome"/>
</dbReference>
<dbReference type="GO" id="GO:0005886">
    <property type="term" value="C:plasma membrane"/>
    <property type="evidence" value="ECO:0007669"/>
    <property type="project" value="UniProtKB-SubCell"/>
</dbReference>
<name>YBFE_BACSU</name>